<keyword id="KW-0131">Cell cycle</keyword>
<keyword id="KW-0132">Cell division</keyword>
<keyword id="KW-0133">Cell shape</keyword>
<keyword id="KW-0961">Cell wall biogenesis/degradation</keyword>
<keyword id="KW-0963">Cytoplasm</keyword>
<keyword id="KW-0274">FAD</keyword>
<keyword id="KW-0285">Flavoprotein</keyword>
<keyword id="KW-0521">NADP</keyword>
<keyword id="KW-0560">Oxidoreductase</keyword>
<keyword id="KW-0573">Peptidoglycan synthesis</keyword>
<comment type="function">
    <text evidence="1">Cell wall formation.</text>
</comment>
<comment type="catalytic activity">
    <reaction evidence="1">
        <text>UDP-N-acetyl-alpha-D-muramate + NADP(+) = UDP-N-acetyl-3-O-(1-carboxyvinyl)-alpha-D-glucosamine + NADPH + H(+)</text>
        <dbReference type="Rhea" id="RHEA:12248"/>
        <dbReference type="ChEBI" id="CHEBI:15378"/>
        <dbReference type="ChEBI" id="CHEBI:57783"/>
        <dbReference type="ChEBI" id="CHEBI:58349"/>
        <dbReference type="ChEBI" id="CHEBI:68483"/>
        <dbReference type="ChEBI" id="CHEBI:70757"/>
        <dbReference type="EC" id="1.3.1.98"/>
    </reaction>
</comment>
<comment type="cofactor">
    <cofactor evidence="1">
        <name>FAD</name>
        <dbReference type="ChEBI" id="CHEBI:57692"/>
    </cofactor>
</comment>
<comment type="pathway">
    <text evidence="1">Cell wall biogenesis; peptidoglycan biosynthesis.</text>
</comment>
<comment type="subcellular location">
    <subcellularLocation>
        <location evidence="1">Cytoplasm</location>
    </subcellularLocation>
</comment>
<comment type="similarity">
    <text evidence="1">Belongs to the MurB family.</text>
</comment>
<gene>
    <name evidence="1" type="primary">murB</name>
    <name type="ordered locus">STY3742</name>
    <name type="ordered locus">t3489</name>
</gene>
<name>MURB_SALTI</name>
<reference key="1">
    <citation type="journal article" date="2001" name="Nature">
        <title>Complete genome sequence of a multiple drug resistant Salmonella enterica serovar Typhi CT18.</title>
        <authorList>
            <person name="Parkhill J."/>
            <person name="Dougan G."/>
            <person name="James K.D."/>
            <person name="Thomson N.R."/>
            <person name="Pickard D."/>
            <person name="Wain J."/>
            <person name="Churcher C.M."/>
            <person name="Mungall K.L."/>
            <person name="Bentley S.D."/>
            <person name="Holden M.T.G."/>
            <person name="Sebaihia M."/>
            <person name="Baker S."/>
            <person name="Basham D."/>
            <person name="Brooks K."/>
            <person name="Chillingworth T."/>
            <person name="Connerton P."/>
            <person name="Cronin A."/>
            <person name="Davis P."/>
            <person name="Davies R.M."/>
            <person name="Dowd L."/>
            <person name="White N."/>
            <person name="Farrar J."/>
            <person name="Feltwell T."/>
            <person name="Hamlin N."/>
            <person name="Haque A."/>
            <person name="Hien T.T."/>
            <person name="Holroyd S."/>
            <person name="Jagels K."/>
            <person name="Krogh A."/>
            <person name="Larsen T.S."/>
            <person name="Leather S."/>
            <person name="Moule S."/>
            <person name="O'Gaora P."/>
            <person name="Parry C."/>
            <person name="Quail M.A."/>
            <person name="Rutherford K.M."/>
            <person name="Simmonds M."/>
            <person name="Skelton J."/>
            <person name="Stevens K."/>
            <person name="Whitehead S."/>
            <person name="Barrell B.G."/>
        </authorList>
    </citation>
    <scope>NUCLEOTIDE SEQUENCE [LARGE SCALE GENOMIC DNA]</scope>
    <source>
        <strain>CT18</strain>
    </source>
</reference>
<reference key="2">
    <citation type="journal article" date="2003" name="J. Bacteriol.">
        <title>Comparative genomics of Salmonella enterica serovar Typhi strains Ty2 and CT18.</title>
        <authorList>
            <person name="Deng W."/>
            <person name="Liou S.-R."/>
            <person name="Plunkett G. III"/>
            <person name="Mayhew G.F."/>
            <person name="Rose D.J."/>
            <person name="Burland V."/>
            <person name="Kodoyianni V."/>
            <person name="Schwartz D.C."/>
            <person name="Blattner F.R."/>
        </authorList>
    </citation>
    <scope>NUCLEOTIDE SEQUENCE [LARGE SCALE GENOMIC DNA]</scope>
    <source>
        <strain>ATCC 700931 / Ty2</strain>
    </source>
</reference>
<proteinExistence type="inferred from homology"/>
<organism>
    <name type="scientific">Salmonella typhi</name>
    <dbReference type="NCBI Taxonomy" id="90370"/>
    <lineage>
        <taxon>Bacteria</taxon>
        <taxon>Pseudomonadati</taxon>
        <taxon>Pseudomonadota</taxon>
        <taxon>Gammaproteobacteria</taxon>
        <taxon>Enterobacterales</taxon>
        <taxon>Enterobacteriaceae</taxon>
        <taxon>Salmonella</taxon>
    </lineage>
</organism>
<dbReference type="EC" id="1.3.1.98" evidence="1"/>
<dbReference type="EMBL" id="AL513382">
    <property type="protein sequence ID" value="CAD09498.1"/>
    <property type="molecule type" value="Genomic_DNA"/>
</dbReference>
<dbReference type="EMBL" id="AE014613">
    <property type="protein sequence ID" value="AAO71001.1"/>
    <property type="molecule type" value="Genomic_DNA"/>
</dbReference>
<dbReference type="RefSeq" id="NP_457928.1">
    <property type="nucleotide sequence ID" value="NC_003198.1"/>
</dbReference>
<dbReference type="RefSeq" id="WP_000149790.1">
    <property type="nucleotide sequence ID" value="NZ_WSUR01000069.1"/>
</dbReference>
<dbReference type="SMR" id="Q8Z316"/>
<dbReference type="STRING" id="220341.gene:17587603"/>
<dbReference type="KEGG" id="stt:t3489"/>
<dbReference type="KEGG" id="sty:STY3742"/>
<dbReference type="PATRIC" id="fig|220341.7.peg.3817"/>
<dbReference type="eggNOG" id="COG0812">
    <property type="taxonomic scope" value="Bacteria"/>
</dbReference>
<dbReference type="HOGENOM" id="CLU_035304_0_0_6"/>
<dbReference type="OMA" id="APLTWFR"/>
<dbReference type="UniPathway" id="UPA00219"/>
<dbReference type="Proteomes" id="UP000000541">
    <property type="component" value="Chromosome"/>
</dbReference>
<dbReference type="Proteomes" id="UP000002670">
    <property type="component" value="Chromosome"/>
</dbReference>
<dbReference type="GO" id="GO:0005829">
    <property type="term" value="C:cytosol"/>
    <property type="evidence" value="ECO:0007669"/>
    <property type="project" value="TreeGrafter"/>
</dbReference>
<dbReference type="GO" id="GO:0071949">
    <property type="term" value="F:FAD binding"/>
    <property type="evidence" value="ECO:0007669"/>
    <property type="project" value="InterPro"/>
</dbReference>
<dbReference type="GO" id="GO:0008762">
    <property type="term" value="F:UDP-N-acetylmuramate dehydrogenase activity"/>
    <property type="evidence" value="ECO:0007669"/>
    <property type="project" value="UniProtKB-UniRule"/>
</dbReference>
<dbReference type="GO" id="GO:0051301">
    <property type="term" value="P:cell division"/>
    <property type="evidence" value="ECO:0007669"/>
    <property type="project" value="UniProtKB-KW"/>
</dbReference>
<dbReference type="GO" id="GO:0071555">
    <property type="term" value="P:cell wall organization"/>
    <property type="evidence" value="ECO:0007669"/>
    <property type="project" value="UniProtKB-KW"/>
</dbReference>
<dbReference type="GO" id="GO:0009252">
    <property type="term" value="P:peptidoglycan biosynthetic process"/>
    <property type="evidence" value="ECO:0007669"/>
    <property type="project" value="UniProtKB-UniRule"/>
</dbReference>
<dbReference type="GO" id="GO:0008360">
    <property type="term" value="P:regulation of cell shape"/>
    <property type="evidence" value="ECO:0007669"/>
    <property type="project" value="UniProtKB-KW"/>
</dbReference>
<dbReference type="FunFam" id="3.30.465.10:FF:000018">
    <property type="entry name" value="UDP-N-acetylenolpyruvoylglucosamine reductase"/>
    <property type="match status" value="1"/>
</dbReference>
<dbReference type="FunFam" id="3.90.78.10:FF:000002">
    <property type="entry name" value="UDP-N-acetylenolpyruvoylglucosamine reductase"/>
    <property type="match status" value="1"/>
</dbReference>
<dbReference type="Gene3D" id="3.30.465.10">
    <property type="match status" value="1"/>
</dbReference>
<dbReference type="Gene3D" id="3.90.78.10">
    <property type="entry name" value="UDP-N-acetylenolpyruvoylglucosamine reductase, C-terminal domain"/>
    <property type="match status" value="1"/>
</dbReference>
<dbReference type="Gene3D" id="3.30.43.10">
    <property type="entry name" value="Uridine Diphospho-n-acetylenolpyruvylglucosamine Reductase, domain 2"/>
    <property type="match status" value="1"/>
</dbReference>
<dbReference type="HAMAP" id="MF_00037">
    <property type="entry name" value="MurB"/>
    <property type="match status" value="1"/>
</dbReference>
<dbReference type="InterPro" id="IPR016166">
    <property type="entry name" value="FAD-bd_PCMH"/>
</dbReference>
<dbReference type="InterPro" id="IPR036318">
    <property type="entry name" value="FAD-bd_PCMH-like_sf"/>
</dbReference>
<dbReference type="InterPro" id="IPR016167">
    <property type="entry name" value="FAD-bd_PCMH_sub1"/>
</dbReference>
<dbReference type="InterPro" id="IPR016169">
    <property type="entry name" value="FAD-bd_PCMH_sub2"/>
</dbReference>
<dbReference type="InterPro" id="IPR003170">
    <property type="entry name" value="MurB"/>
</dbReference>
<dbReference type="InterPro" id="IPR011601">
    <property type="entry name" value="MurB_C"/>
</dbReference>
<dbReference type="InterPro" id="IPR036635">
    <property type="entry name" value="MurB_C_sf"/>
</dbReference>
<dbReference type="InterPro" id="IPR006094">
    <property type="entry name" value="Oxid_FAD_bind_N"/>
</dbReference>
<dbReference type="NCBIfam" id="TIGR00179">
    <property type="entry name" value="murB"/>
    <property type="match status" value="1"/>
</dbReference>
<dbReference type="NCBIfam" id="NF000755">
    <property type="entry name" value="PRK00046.1"/>
    <property type="match status" value="1"/>
</dbReference>
<dbReference type="PANTHER" id="PTHR21071">
    <property type="entry name" value="UDP-N-ACETYLENOLPYRUVOYLGLUCOSAMINE REDUCTASE"/>
    <property type="match status" value="1"/>
</dbReference>
<dbReference type="PANTHER" id="PTHR21071:SF4">
    <property type="entry name" value="UDP-N-ACETYLENOLPYRUVOYLGLUCOSAMINE REDUCTASE"/>
    <property type="match status" value="1"/>
</dbReference>
<dbReference type="Pfam" id="PF01565">
    <property type="entry name" value="FAD_binding_4"/>
    <property type="match status" value="1"/>
</dbReference>
<dbReference type="Pfam" id="PF02873">
    <property type="entry name" value="MurB_C"/>
    <property type="match status" value="1"/>
</dbReference>
<dbReference type="SUPFAM" id="SSF56176">
    <property type="entry name" value="FAD-binding/transporter-associated domain-like"/>
    <property type="match status" value="1"/>
</dbReference>
<dbReference type="SUPFAM" id="SSF56194">
    <property type="entry name" value="Uridine diphospho-N-Acetylenolpyruvylglucosamine reductase, MurB, C-terminal domain"/>
    <property type="match status" value="1"/>
</dbReference>
<dbReference type="PROSITE" id="PS51387">
    <property type="entry name" value="FAD_PCMH"/>
    <property type="match status" value="1"/>
</dbReference>
<sequence>MTHSLKPWNTFGIDHCAKHIVCAENEQQLLSAWQQATREGLPVMILGEGSNVLFLENYAGTVILNRLKGIEVNETADAWHLHVGAGENWHQLVRYALDNNMPGLENLALIPGCVGSSPIQNIGAYGVELHRVCDYVDCVELETGKRLRLSAAECRFGYRDSIFKNEYQDRVAIVAVGLRLSKQWQPVLTYGDLTRLDPKTVTAQQVFDAVCHMRTTKLPDPKVNGNAGSFFKNPVVAADIAMELLERFPNAPHYPQADGSVKLAAGWLIDQCQLKGVTIGGAAVHRQQALVLINANDATSKDVVALAHHVRQKVGEKFNVWLEPEVRFIGQFGEVNAVESIA</sequence>
<protein>
    <recommendedName>
        <fullName evidence="1">UDP-N-acetylenolpyruvoylglucosamine reductase</fullName>
        <ecNumber evidence="1">1.3.1.98</ecNumber>
    </recommendedName>
    <alternativeName>
        <fullName evidence="1">UDP-N-acetylmuramate dehydrogenase</fullName>
    </alternativeName>
</protein>
<accession>Q8Z316</accession>
<evidence type="ECO:0000255" key="1">
    <source>
        <dbReference type="HAMAP-Rule" id="MF_00037"/>
    </source>
</evidence>
<feature type="chain" id="PRO_0000179252" description="UDP-N-acetylenolpyruvoylglucosamine reductase">
    <location>
        <begin position="1"/>
        <end position="342"/>
    </location>
</feature>
<feature type="domain" description="FAD-binding PCMH-type" evidence="1">
    <location>
        <begin position="13"/>
        <end position="183"/>
    </location>
</feature>
<feature type="active site" evidence="1">
    <location>
        <position position="159"/>
    </location>
</feature>
<feature type="active site" description="Proton donor" evidence="1">
    <location>
        <position position="229"/>
    </location>
</feature>
<feature type="active site" evidence="1">
    <location>
        <position position="325"/>
    </location>
</feature>